<reference key="1">
    <citation type="journal article" date="2005" name="Gene">
        <title>The first complete chloroplast genome sequence of a lycophyte, Huperzia lucidula (Lycopodiaceae).</title>
        <authorList>
            <person name="Wolf P.G."/>
            <person name="Karol K.G."/>
            <person name="Mandoli D.F."/>
            <person name="Kuehl J.V."/>
            <person name="Arumuganathan K."/>
            <person name="Ellis M.W."/>
            <person name="Mishler B.D."/>
            <person name="Kelch D.G."/>
            <person name="Olmstead R.G."/>
            <person name="Boore J.L."/>
        </authorList>
    </citation>
    <scope>NUCLEOTIDE SEQUENCE [LARGE SCALE GENOMIC DNA]</scope>
</reference>
<feature type="chain" id="PRO_0000219825" description="Light-independent protochlorophyllide reductase subunit B">
    <location>
        <begin position="1"/>
        <end position="511"/>
    </location>
</feature>
<feature type="active site" description="Proton donor" evidence="1">
    <location>
        <position position="299"/>
    </location>
</feature>
<feature type="binding site" evidence="1">
    <location>
        <position position="36"/>
    </location>
    <ligand>
        <name>[4Fe-4S] cluster</name>
        <dbReference type="ChEBI" id="CHEBI:49883"/>
        <note>ligand shared with heterodimeric partner</note>
    </ligand>
</feature>
<feature type="binding site" evidence="1">
    <location>
        <begin position="434"/>
        <end position="435"/>
    </location>
    <ligand>
        <name>substrate</name>
    </ligand>
</feature>
<gene>
    <name evidence="1" type="primary">chlB</name>
</gene>
<evidence type="ECO:0000255" key="1">
    <source>
        <dbReference type="HAMAP-Rule" id="MF_00353"/>
    </source>
</evidence>
<dbReference type="EC" id="1.3.7.7" evidence="1"/>
<dbReference type="EMBL" id="AY660566">
    <property type="protein sequence ID" value="AAT80735.1"/>
    <property type="molecule type" value="Genomic_DNA"/>
</dbReference>
<dbReference type="RefSeq" id="YP_209539.1">
    <property type="nucleotide sequence ID" value="NC_006861.1"/>
</dbReference>
<dbReference type="SMR" id="Q5SCX2"/>
<dbReference type="GeneID" id="3283710"/>
<dbReference type="UniPathway" id="UPA00670"/>
<dbReference type="GO" id="GO:0009507">
    <property type="term" value="C:chloroplast"/>
    <property type="evidence" value="ECO:0007669"/>
    <property type="project" value="UniProtKB-SubCell"/>
</dbReference>
<dbReference type="GO" id="GO:0051539">
    <property type="term" value="F:4 iron, 4 sulfur cluster binding"/>
    <property type="evidence" value="ECO:0007669"/>
    <property type="project" value="UniProtKB-UniRule"/>
</dbReference>
<dbReference type="GO" id="GO:0005524">
    <property type="term" value="F:ATP binding"/>
    <property type="evidence" value="ECO:0007669"/>
    <property type="project" value="UniProtKB-UniRule"/>
</dbReference>
<dbReference type="GO" id="GO:0046872">
    <property type="term" value="F:metal ion binding"/>
    <property type="evidence" value="ECO:0007669"/>
    <property type="project" value="UniProtKB-KW"/>
</dbReference>
<dbReference type="GO" id="GO:0016730">
    <property type="term" value="F:oxidoreductase activity, acting on iron-sulfur proteins as donors"/>
    <property type="evidence" value="ECO:0007669"/>
    <property type="project" value="InterPro"/>
</dbReference>
<dbReference type="GO" id="GO:0016636">
    <property type="term" value="F:oxidoreductase activity, acting on the CH-CH group of donors, iron-sulfur protein as acceptor"/>
    <property type="evidence" value="ECO:0007669"/>
    <property type="project" value="UniProtKB-UniRule"/>
</dbReference>
<dbReference type="GO" id="GO:0036068">
    <property type="term" value="P:light-independent chlorophyll biosynthetic process"/>
    <property type="evidence" value="ECO:0007669"/>
    <property type="project" value="UniProtKB-UniRule"/>
</dbReference>
<dbReference type="GO" id="GO:0019685">
    <property type="term" value="P:photosynthesis, dark reaction"/>
    <property type="evidence" value="ECO:0007669"/>
    <property type="project" value="InterPro"/>
</dbReference>
<dbReference type="CDD" id="cd01981">
    <property type="entry name" value="Pchlide_reductase_B"/>
    <property type="match status" value="1"/>
</dbReference>
<dbReference type="Gene3D" id="1.20.89.20">
    <property type="match status" value="1"/>
</dbReference>
<dbReference type="Gene3D" id="3.40.50.1980">
    <property type="entry name" value="Nitrogenase molybdenum iron protein domain"/>
    <property type="match status" value="3"/>
</dbReference>
<dbReference type="Gene3D" id="1.10.8.550">
    <property type="entry name" value="Proto-chlorophyllide reductase 57 kD subunit B"/>
    <property type="match status" value="1"/>
</dbReference>
<dbReference type="HAMAP" id="MF_00353">
    <property type="entry name" value="ChlB_BchB"/>
    <property type="match status" value="1"/>
</dbReference>
<dbReference type="InterPro" id="IPR050152">
    <property type="entry name" value="ChlB/BchB/BchZ"/>
</dbReference>
<dbReference type="InterPro" id="IPR013580">
    <property type="entry name" value="LI-POR_suB-like_C"/>
</dbReference>
<dbReference type="InterPro" id="IPR000510">
    <property type="entry name" value="Nase/OxRdtase_comp1"/>
</dbReference>
<dbReference type="InterPro" id="IPR042298">
    <property type="entry name" value="P-CP_red_C"/>
</dbReference>
<dbReference type="InterPro" id="IPR005969">
    <property type="entry name" value="Protochl_reductB"/>
</dbReference>
<dbReference type="InterPro" id="IPR016209">
    <property type="entry name" value="Protochlorophyllide_Rdtase"/>
</dbReference>
<dbReference type="NCBIfam" id="TIGR01278">
    <property type="entry name" value="DPOR_BchB"/>
    <property type="match status" value="1"/>
</dbReference>
<dbReference type="PANTHER" id="PTHR33712">
    <property type="entry name" value="LIGHT-INDEPENDENT PROTOCHLOROPHYLLIDE REDUCTASE SUBUNIT B"/>
    <property type="match status" value="1"/>
</dbReference>
<dbReference type="PANTHER" id="PTHR33712:SF7">
    <property type="entry name" value="LIGHT-INDEPENDENT PROTOCHLOROPHYLLIDE REDUCTASE SUBUNIT B"/>
    <property type="match status" value="1"/>
</dbReference>
<dbReference type="Pfam" id="PF00148">
    <property type="entry name" value="Oxidored_nitro"/>
    <property type="match status" value="1"/>
</dbReference>
<dbReference type="Pfam" id="PF08369">
    <property type="entry name" value="PCP_red"/>
    <property type="match status" value="1"/>
</dbReference>
<dbReference type="PIRSF" id="PIRSF000163">
    <property type="entry name" value="PCP_ChlB"/>
    <property type="match status" value="1"/>
</dbReference>
<dbReference type="SUPFAM" id="SSF53807">
    <property type="entry name" value="Helical backbone' metal receptor"/>
    <property type="match status" value="1"/>
</dbReference>
<name>CHLB_HUPLU</name>
<comment type="function">
    <text evidence="1">Component of the dark-operative protochlorophyllide reductase (DPOR) that uses Mg-ATP and reduced ferredoxin to reduce ring D of protochlorophyllide (Pchlide) to form chlorophyllide a (Chlide). This reaction is light-independent. The NB-protein (ChlN-ChlB) is the catalytic component of the complex.</text>
</comment>
<comment type="catalytic activity">
    <reaction evidence="1">
        <text>chlorophyllide a + oxidized 2[4Fe-4S]-[ferredoxin] + 2 ADP + 2 phosphate = protochlorophyllide a + reduced 2[4Fe-4S]-[ferredoxin] + 2 ATP + 2 H2O</text>
        <dbReference type="Rhea" id="RHEA:28202"/>
        <dbReference type="Rhea" id="RHEA-COMP:10002"/>
        <dbReference type="Rhea" id="RHEA-COMP:10004"/>
        <dbReference type="ChEBI" id="CHEBI:15377"/>
        <dbReference type="ChEBI" id="CHEBI:30616"/>
        <dbReference type="ChEBI" id="CHEBI:33722"/>
        <dbReference type="ChEBI" id="CHEBI:33723"/>
        <dbReference type="ChEBI" id="CHEBI:43474"/>
        <dbReference type="ChEBI" id="CHEBI:83348"/>
        <dbReference type="ChEBI" id="CHEBI:83350"/>
        <dbReference type="ChEBI" id="CHEBI:456216"/>
        <dbReference type="EC" id="1.3.7.7"/>
    </reaction>
</comment>
<comment type="cofactor">
    <cofactor evidence="1">
        <name>[4Fe-4S] cluster</name>
        <dbReference type="ChEBI" id="CHEBI:49883"/>
    </cofactor>
    <text evidence="1">Binds 1 [4Fe-4S] cluster per heterodimer. The cluster is bound at the heterodimer interface by residues from both subunits.</text>
</comment>
<comment type="pathway">
    <text evidence="1">Porphyrin-containing compound metabolism; chlorophyll biosynthesis (light-independent).</text>
</comment>
<comment type="subunit">
    <text evidence="1">Protochlorophyllide reductase is composed of three subunits; ChlL, ChlN and ChlB. Forms a heterotetramer of two ChlB and two ChlN subunits.</text>
</comment>
<comment type="subcellular location">
    <subcellularLocation>
        <location>Plastid</location>
        <location>Chloroplast</location>
    </subcellularLocation>
</comment>
<comment type="similarity">
    <text evidence="1">Belongs to the ChlB/BchB/BchZ family.</text>
</comment>
<accession>Q5SCX2</accession>
<geneLocation type="chloroplast"/>
<organism>
    <name type="scientific">Huperzia lucidula</name>
    <name type="common">Shining clubmoss</name>
    <name type="synonym">Lycopodium lucidulum</name>
    <dbReference type="NCBI Taxonomy" id="37429"/>
    <lineage>
        <taxon>Eukaryota</taxon>
        <taxon>Viridiplantae</taxon>
        <taxon>Streptophyta</taxon>
        <taxon>Embryophyta</taxon>
        <taxon>Tracheophyta</taxon>
        <taxon>Lycopodiopsida</taxon>
        <taxon>Lycopodiales</taxon>
        <taxon>Lycopodiaceae</taxon>
        <taxon>Huperzioideae</taxon>
        <taxon>Huperzia</taxon>
    </lineage>
</organism>
<keyword id="KW-0004">4Fe-4S</keyword>
<keyword id="KW-0067">ATP-binding</keyword>
<keyword id="KW-0149">Chlorophyll biosynthesis</keyword>
<keyword id="KW-0150">Chloroplast</keyword>
<keyword id="KW-0408">Iron</keyword>
<keyword id="KW-0411">Iron-sulfur</keyword>
<keyword id="KW-0479">Metal-binding</keyword>
<keyword id="KW-0547">Nucleotide-binding</keyword>
<keyword id="KW-0560">Oxidoreductase</keyword>
<keyword id="KW-0602">Photosynthesis</keyword>
<keyword id="KW-0934">Plastid</keyword>
<proteinExistence type="inferred from homology"/>
<sequence>MKLVYWMYAGPAHIGTLRVASSFKNVHAIMHAPLGDDYFNVMRSMLERERDFTPVTASIVDRHVLTRGSQDKVVDNITRKDKEERPNLIILTPTCTSSILQEDLQNFVDRASIISDSDVILADVNHYRVNELQAADKTLEQVVRYYLGKARRRRTLDQSITDVPSANIIGISTLGFHNQHDFRELKRLLQDLGIKINQVIPEGSFVEDLENLPKAWFNFVPYREIGLMTAVYLEKEFGIPYVSVTPMGVVDTAKCIRQIQKHINNLAVVALEETVDYEPYVYQQTQFVSQAIWFSKSIDCQNLKKKKAVIFGDATHAASMTKILNREMGIRVSCAGTYCKHDKEWFNEQVHNFCDEVLITDDHAEVANKVARIEPSAIFGTQMERHIGKRLNIPCGVVSAPVHIQNFPLGYRPFSGYEGTNQIADSVYNSFIPGMEDHFIDLFGGHDTKEVIMKSLCTEKGVIWDPESQLELSKIPSFMRSKIKRKIDKFAVHNGFTKINIKIMYAALICL</sequence>
<protein>
    <recommendedName>
        <fullName evidence="1">Light-independent protochlorophyllide reductase subunit B</fullName>
        <shortName evidence="1">DPOR subunit B</shortName>
        <shortName evidence="1">LI-POR subunit B</shortName>
        <ecNumber evidence="1">1.3.7.7</ecNumber>
    </recommendedName>
</protein>